<name>ARAB_SERP5</name>
<proteinExistence type="inferred from homology"/>
<reference key="1">
    <citation type="submission" date="2007-09" db="EMBL/GenBank/DDBJ databases">
        <title>Complete sequence of chromosome of Serratia proteamaculans 568.</title>
        <authorList>
            <consortium name="US DOE Joint Genome Institute"/>
            <person name="Copeland A."/>
            <person name="Lucas S."/>
            <person name="Lapidus A."/>
            <person name="Barry K."/>
            <person name="Glavina del Rio T."/>
            <person name="Dalin E."/>
            <person name="Tice H."/>
            <person name="Pitluck S."/>
            <person name="Chain P."/>
            <person name="Malfatti S."/>
            <person name="Shin M."/>
            <person name="Vergez L."/>
            <person name="Schmutz J."/>
            <person name="Larimer F."/>
            <person name="Land M."/>
            <person name="Hauser L."/>
            <person name="Kyrpides N."/>
            <person name="Kim E."/>
            <person name="Taghavi S."/>
            <person name="Newman L."/>
            <person name="Vangronsveld J."/>
            <person name="van der Lelie D."/>
            <person name="Richardson P."/>
        </authorList>
    </citation>
    <scope>NUCLEOTIDE SEQUENCE [LARGE SCALE GENOMIC DNA]</scope>
    <source>
        <strain>568</strain>
    </source>
</reference>
<feature type="chain" id="PRO_1000060920" description="Ribulokinase">
    <location>
        <begin position="1"/>
        <end position="561"/>
    </location>
</feature>
<protein>
    <recommendedName>
        <fullName evidence="1">Ribulokinase</fullName>
        <ecNumber evidence="1">2.7.1.16</ecNumber>
    </recommendedName>
</protein>
<comment type="catalytic activity">
    <reaction evidence="1">
        <text>D-ribulose + ATP = D-ribulose 5-phosphate + ADP + H(+)</text>
        <dbReference type="Rhea" id="RHEA:17601"/>
        <dbReference type="ChEBI" id="CHEBI:15378"/>
        <dbReference type="ChEBI" id="CHEBI:17173"/>
        <dbReference type="ChEBI" id="CHEBI:30616"/>
        <dbReference type="ChEBI" id="CHEBI:58121"/>
        <dbReference type="ChEBI" id="CHEBI:456216"/>
        <dbReference type="EC" id="2.7.1.16"/>
    </reaction>
</comment>
<comment type="catalytic activity">
    <reaction evidence="1">
        <text>L-ribulose + ATP = L-ribulose 5-phosphate + ADP + H(+)</text>
        <dbReference type="Rhea" id="RHEA:22072"/>
        <dbReference type="ChEBI" id="CHEBI:15378"/>
        <dbReference type="ChEBI" id="CHEBI:16880"/>
        <dbReference type="ChEBI" id="CHEBI:30616"/>
        <dbReference type="ChEBI" id="CHEBI:58226"/>
        <dbReference type="ChEBI" id="CHEBI:456216"/>
        <dbReference type="EC" id="2.7.1.16"/>
    </reaction>
</comment>
<comment type="pathway">
    <text evidence="1">Carbohydrate degradation; L-arabinose degradation via L-ribulose; D-xylulose 5-phosphate from L-arabinose (bacterial route): step 2/3.</text>
</comment>
<comment type="similarity">
    <text evidence="1">Belongs to the ribulokinase family.</text>
</comment>
<keyword id="KW-0054">Arabinose catabolism</keyword>
<keyword id="KW-0067">ATP-binding</keyword>
<keyword id="KW-0119">Carbohydrate metabolism</keyword>
<keyword id="KW-0418">Kinase</keyword>
<keyword id="KW-0547">Nucleotide-binding</keyword>
<keyword id="KW-0808">Transferase</keyword>
<organism>
    <name type="scientific">Serratia proteamaculans (strain 568)</name>
    <dbReference type="NCBI Taxonomy" id="399741"/>
    <lineage>
        <taxon>Bacteria</taxon>
        <taxon>Pseudomonadati</taxon>
        <taxon>Pseudomonadota</taxon>
        <taxon>Gammaproteobacteria</taxon>
        <taxon>Enterobacterales</taxon>
        <taxon>Yersiniaceae</taxon>
        <taxon>Serratia</taxon>
    </lineage>
</organism>
<sequence length="561" mass="61186">MTAGAIALGLDFGSDSVRVLAVDCHNGAELDTEVVYYPRWQRGEFCNAAENRFRHHPLDYIEAMEQAIVTLVQRMPPQQRLQVIGIGVDSTGSTPAPIDEQGQVLALRPEFADNPNAMFVLWKDHTAIEEADAINRLCRSGEFPDYSRYIGGVYSSEWFWAKILHVTRQDAEVRQAAASWVELCDWVPALLSATTAPHQLKRGRCSVGHKTLWHPDWGGLPPKAFFAALDPLLVEHLPWPLFEDCHTADLPVGTLSAEWAARLGLPTTVVLSGGAFDCHMGAVGAGAQPYTLVKVIGTSTCDILIADRQRVDGRAIEGICGQVDGSVVPGMIGMEAGQSAFGDMYAWFSRLLSWPLHAAAKNQPELQPQLQKIEAGLLAALTDAWVENPSLDHLPVVLDWFNGRRTPYANQRLKGVIADLNLGTDAPTLFGGFIAATAFGARAIMECFEQQDIPVDNVLALGGIARKSPAIMQACADVMNRPLQIVASDQCCALGAAIFAAVAAGRFISVPEAQRQMACGIERTLQPDPQRVARYQQLYQRYQQWCQAAEPRYAPTSGSAN</sequence>
<accession>A8GE05</accession>
<dbReference type="EC" id="2.7.1.16" evidence="1"/>
<dbReference type="EMBL" id="CP000826">
    <property type="protein sequence ID" value="ABV41345.1"/>
    <property type="molecule type" value="Genomic_DNA"/>
</dbReference>
<dbReference type="SMR" id="A8GE05"/>
<dbReference type="STRING" id="399741.Spro_2244"/>
<dbReference type="KEGG" id="spe:Spro_2244"/>
<dbReference type="eggNOG" id="COG1069">
    <property type="taxonomic scope" value="Bacteria"/>
</dbReference>
<dbReference type="HOGENOM" id="CLU_009281_9_1_6"/>
<dbReference type="OrthoDB" id="9805576at2"/>
<dbReference type="UniPathway" id="UPA00145">
    <property type="reaction ID" value="UER00566"/>
</dbReference>
<dbReference type="GO" id="GO:0005737">
    <property type="term" value="C:cytoplasm"/>
    <property type="evidence" value="ECO:0007669"/>
    <property type="project" value="TreeGrafter"/>
</dbReference>
<dbReference type="GO" id="GO:0005524">
    <property type="term" value="F:ATP binding"/>
    <property type="evidence" value="ECO:0007669"/>
    <property type="project" value="UniProtKB-KW"/>
</dbReference>
<dbReference type="GO" id="GO:0019150">
    <property type="term" value="F:D-ribulokinase activity"/>
    <property type="evidence" value="ECO:0007669"/>
    <property type="project" value="RHEA"/>
</dbReference>
<dbReference type="GO" id="GO:0008741">
    <property type="term" value="F:ribulokinase activity"/>
    <property type="evidence" value="ECO:0007669"/>
    <property type="project" value="UniProtKB-UniRule"/>
</dbReference>
<dbReference type="GO" id="GO:0019569">
    <property type="term" value="P:L-arabinose catabolic process to xylulose 5-phosphate"/>
    <property type="evidence" value="ECO:0007669"/>
    <property type="project" value="UniProtKB-UniRule"/>
</dbReference>
<dbReference type="CDD" id="cd07781">
    <property type="entry name" value="ASKHA_NBD_FGGY_L-RBK"/>
    <property type="match status" value="1"/>
</dbReference>
<dbReference type="Gene3D" id="1.20.58.2240">
    <property type="match status" value="1"/>
</dbReference>
<dbReference type="Gene3D" id="3.30.420.40">
    <property type="match status" value="1"/>
</dbReference>
<dbReference type="HAMAP" id="MF_00520">
    <property type="entry name" value="Ribulokinase"/>
    <property type="match status" value="1"/>
</dbReference>
<dbReference type="InterPro" id="IPR043129">
    <property type="entry name" value="ATPase_NBD"/>
</dbReference>
<dbReference type="InterPro" id="IPR000577">
    <property type="entry name" value="Carb_kinase_FGGY"/>
</dbReference>
<dbReference type="InterPro" id="IPR018485">
    <property type="entry name" value="FGGY_C"/>
</dbReference>
<dbReference type="InterPro" id="IPR005929">
    <property type="entry name" value="Ribulokinase"/>
</dbReference>
<dbReference type="NCBIfam" id="TIGR01234">
    <property type="entry name" value="L-ribulokinase"/>
    <property type="match status" value="1"/>
</dbReference>
<dbReference type="NCBIfam" id="NF003154">
    <property type="entry name" value="PRK04123.1"/>
    <property type="match status" value="1"/>
</dbReference>
<dbReference type="PANTHER" id="PTHR43435:SF4">
    <property type="entry name" value="FGGY CARBOHYDRATE KINASE DOMAIN-CONTAINING PROTEIN"/>
    <property type="match status" value="1"/>
</dbReference>
<dbReference type="PANTHER" id="PTHR43435">
    <property type="entry name" value="RIBULOKINASE"/>
    <property type="match status" value="1"/>
</dbReference>
<dbReference type="Pfam" id="PF02782">
    <property type="entry name" value="FGGY_C"/>
    <property type="match status" value="1"/>
</dbReference>
<dbReference type="PIRSF" id="PIRSF000538">
    <property type="entry name" value="GlpK"/>
    <property type="match status" value="1"/>
</dbReference>
<dbReference type="SUPFAM" id="SSF53067">
    <property type="entry name" value="Actin-like ATPase domain"/>
    <property type="match status" value="2"/>
</dbReference>
<evidence type="ECO:0000255" key="1">
    <source>
        <dbReference type="HAMAP-Rule" id="MF_00520"/>
    </source>
</evidence>
<gene>
    <name evidence="1" type="primary">araB</name>
    <name type="ordered locus">Spro_2244</name>
</gene>